<dbReference type="EC" id="1.14.-.-"/>
<dbReference type="EMBL" id="AL123456">
    <property type="protein sequence ID" value="CCP44646.1"/>
    <property type="molecule type" value="Genomic_DNA"/>
</dbReference>
<dbReference type="PIR" id="E70515">
    <property type="entry name" value="E70515"/>
</dbReference>
<dbReference type="RefSeq" id="NP_216396.3">
    <property type="nucleotide sequence ID" value="NC_000962.3"/>
</dbReference>
<dbReference type="RefSeq" id="WP_003409406.1">
    <property type="nucleotide sequence ID" value="NZ_NVQJ01000013.1"/>
</dbReference>
<dbReference type="SMR" id="P9WPL9"/>
<dbReference type="FunCoup" id="P9WPL9">
    <property type="interactions" value="11"/>
</dbReference>
<dbReference type="STRING" id="83332.Rv1880c"/>
<dbReference type="PaxDb" id="83332-Rv1880c"/>
<dbReference type="DNASU" id="885758"/>
<dbReference type="GeneID" id="885758"/>
<dbReference type="KEGG" id="mtu:Rv1880c"/>
<dbReference type="KEGG" id="mtv:RVBD_1880c"/>
<dbReference type="TubercuList" id="Rv1880c"/>
<dbReference type="eggNOG" id="COG2124">
    <property type="taxonomic scope" value="Bacteria"/>
</dbReference>
<dbReference type="InParanoid" id="P9WPL9"/>
<dbReference type="OrthoDB" id="142769at2"/>
<dbReference type="PhylomeDB" id="P9WPL9"/>
<dbReference type="Proteomes" id="UP000001584">
    <property type="component" value="Chromosome"/>
</dbReference>
<dbReference type="GO" id="GO:0036199">
    <property type="term" value="F:cholest-4-en-3-one 26-monooxygenase activity"/>
    <property type="evidence" value="ECO:0000318"/>
    <property type="project" value="GO_Central"/>
</dbReference>
<dbReference type="GO" id="GO:0020037">
    <property type="term" value="F:heme binding"/>
    <property type="evidence" value="ECO:0000318"/>
    <property type="project" value="GO_Central"/>
</dbReference>
<dbReference type="GO" id="GO:0005506">
    <property type="term" value="F:iron ion binding"/>
    <property type="evidence" value="ECO:0007669"/>
    <property type="project" value="InterPro"/>
</dbReference>
<dbReference type="GO" id="GO:0008395">
    <property type="term" value="F:steroid hydroxylase activity"/>
    <property type="evidence" value="ECO:0000318"/>
    <property type="project" value="GO_Central"/>
</dbReference>
<dbReference type="GO" id="GO:0006707">
    <property type="term" value="P:cholesterol catabolic process"/>
    <property type="evidence" value="ECO:0000318"/>
    <property type="project" value="GO_Central"/>
</dbReference>
<dbReference type="CDD" id="cd20625">
    <property type="entry name" value="CYP164-like"/>
    <property type="match status" value="1"/>
</dbReference>
<dbReference type="FunFam" id="1.10.630.10:FF:000018">
    <property type="entry name" value="Cytochrome P450 monooxygenase"/>
    <property type="match status" value="1"/>
</dbReference>
<dbReference type="Gene3D" id="1.10.630.10">
    <property type="entry name" value="Cytochrome P450"/>
    <property type="match status" value="1"/>
</dbReference>
<dbReference type="InterPro" id="IPR001128">
    <property type="entry name" value="Cyt_P450"/>
</dbReference>
<dbReference type="InterPro" id="IPR002397">
    <property type="entry name" value="Cyt_P450_B"/>
</dbReference>
<dbReference type="InterPro" id="IPR017972">
    <property type="entry name" value="Cyt_P450_CS"/>
</dbReference>
<dbReference type="InterPro" id="IPR036396">
    <property type="entry name" value="Cyt_P450_sf"/>
</dbReference>
<dbReference type="PANTHER" id="PTHR46696:SF4">
    <property type="entry name" value="BIOTIN BIOSYNTHESIS CYTOCHROME P450"/>
    <property type="match status" value="1"/>
</dbReference>
<dbReference type="PANTHER" id="PTHR46696">
    <property type="entry name" value="P450, PUTATIVE (EUROFUNG)-RELATED"/>
    <property type="match status" value="1"/>
</dbReference>
<dbReference type="Pfam" id="PF00067">
    <property type="entry name" value="p450"/>
    <property type="match status" value="1"/>
</dbReference>
<dbReference type="PRINTS" id="PR00359">
    <property type="entry name" value="BP450"/>
</dbReference>
<dbReference type="SUPFAM" id="SSF48264">
    <property type="entry name" value="Cytochrome P450"/>
    <property type="match status" value="1"/>
</dbReference>
<dbReference type="PROSITE" id="PS00086">
    <property type="entry name" value="CYTOCHROME_P450"/>
    <property type="match status" value="1"/>
</dbReference>
<protein>
    <recommendedName>
        <fullName>Putative cytochrome P450 140</fullName>
        <ecNumber>1.14.-.-</ecNumber>
    </recommendedName>
</protein>
<reference key="1">
    <citation type="journal article" date="1998" name="Nature">
        <title>Deciphering the biology of Mycobacterium tuberculosis from the complete genome sequence.</title>
        <authorList>
            <person name="Cole S.T."/>
            <person name="Brosch R."/>
            <person name="Parkhill J."/>
            <person name="Garnier T."/>
            <person name="Churcher C.M."/>
            <person name="Harris D.E."/>
            <person name="Gordon S.V."/>
            <person name="Eiglmeier K."/>
            <person name="Gas S."/>
            <person name="Barry C.E. III"/>
            <person name="Tekaia F."/>
            <person name="Badcock K."/>
            <person name="Basham D."/>
            <person name="Brown D."/>
            <person name="Chillingworth T."/>
            <person name="Connor R."/>
            <person name="Davies R.M."/>
            <person name="Devlin K."/>
            <person name="Feltwell T."/>
            <person name="Gentles S."/>
            <person name="Hamlin N."/>
            <person name="Holroyd S."/>
            <person name="Hornsby T."/>
            <person name="Jagels K."/>
            <person name="Krogh A."/>
            <person name="McLean J."/>
            <person name="Moule S."/>
            <person name="Murphy L.D."/>
            <person name="Oliver S."/>
            <person name="Osborne J."/>
            <person name="Quail M.A."/>
            <person name="Rajandream M.A."/>
            <person name="Rogers J."/>
            <person name="Rutter S."/>
            <person name="Seeger K."/>
            <person name="Skelton S."/>
            <person name="Squares S."/>
            <person name="Squares R."/>
            <person name="Sulston J.E."/>
            <person name="Taylor K."/>
            <person name="Whitehead S."/>
            <person name="Barrell B.G."/>
        </authorList>
    </citation>
    <scope>NUCLEOTIDE SEQUENCE [LARGE SCALE GENOMIC DNA]</scope>
    <source>
        <strain>ATCC 25618 / H37Rv</strain>
    </source>
</reference>
<reference key="2">
    <citation type="journal article" date="2011" name="Mol. Cell. Proteomics">
        <title>Proteogenomic analysis of Mycobacterium tuberculosis by high resolution mass spectrometry.</title>
        <authorList>
            <person name="Kelkar D.S."/>
            <person name="Kumar D."/>
            <person name="Kumar P."/>
            <person name="Balakrishnan L."/>
            <person name="Muthusamy B."/>
            <person name="Yadav A.K."/>
            <person name="Shrivastava P."/>
            <person name="Marimuthu A."/>
            <person name="Anand S."/>
            <person name="Sundaram H."/>
            <person name="Kingsbury R."/>
            <person name="Harsha H.C."/>
            <person name="Nair B."/>
            <person name="Prasad T.S."/>
            <person name="Chauhan D.S."/>
            <person name="Katoch K."/>
            <person name="Katoch V.M."/>
            <person name="Kumar P."/>
            <person name="Chaerkady R."/>
            <person name="Ramachandran S."/>
            <person name="Dash D."/>
            <person name="Pandey A."/>
        </authorList>
    </citation>
    <scope>IDENTIFICATION BY MASS SPECTROMETRY [LARGE SCALE ANALYSIS]</scope>
    <source>
        <strain>ATCC 25618 / H37Rv</strain>
    </source>
</reference>
<evidence type="ECO:0000250" key="1"/>
<evidence type="ECO:0000305" key="2"/>
<feature type="chain" id="PRO_0000052302" description="Putative cytochrome P450 140">
    <location>
        <begin position="1"/>
        <end position="438"/>
    </location>
</feature>
<feature type="binding site" description="axial binding residue" evidence="1">
    <location>
        <position position="381"/>
    </location>
    <ligand>
        <name>heme</name>
        <dbReference type="ChEBI" id="CHEBI:30413"/>
    </ligand>
    <ligandPart>
        <name>Fe</name>
        <dbReference type="ChEBI" id="CHEBI:18248"/>
    </ligandPart>
</feature>
<accession>P9WPL9</accession>
<accession>L0T9I7</accession>
<accession>O08464</accession>
<accession>P63721</accession>
<proteinExistence type="evidence at protein level"/>
<sequence>MKDKLHWLAMHGVIRGIAAIGIRRGDLQARLIADPAVATDPVPFYDEVRSHGALVRNRANYLTVDHRLAHDLLRSDDFRVVSFGENLPPPLRWLERRTRGDQLHPLREPSLLAVEPPDHTRYRKTVSAVFTSRAVSALRDLVEQTAINLLDRFAEQPGIVDVVGRYCSQLPIVVISEILGVPEHDRPRVLEFGELAAPSLDIGIPWRQYLRVQQGIRGFDCWLEGHLQQLRHAPGDDLMSQLIQIAESGDNETQLDETELRAIAGLVLVAGFETTVNLLGNGIRMLLDTPEHLATLRQHPELWPNTVEEILRLDSPVQLTARVACRDVEVAGVRIKRGEVVVIYLAAANRDPAVFPDPHRFDIERPNAGRHLAFSTGRHFCLGAALARAEGEVGLRTFFDRFPDVRAAGAGSRRDTRVLRGWSTLPVTLGPARSMVSP</sequence>
<comment type="cofactor">
    <cofactor evidence="1">
        <name>heme</name>
        <dbReference type="ChEBI" id="CHEBI:30413"/>
    </cofactor>
</comment>
<comment type="similarity">
    <text evidence="2">Belongs to the cytochrome P450 family.</text>
</comment>
<keyword id="KW-0349">Heme</keyword>
<keyword id="KW-0408">Iron</keyword>
<keyword id="KW-0479">Metal-binding</keyword>
<keyword id="KW-0503">Monooxygenase</keyword>
<keyword id="KW-0560">Oxidoreductase</keyword>
<keyword id="KW-1185">Reference proteome</keyword>
<organism>
    <name type="scientific">Mycobacterium tuberculosis (strain ATCC 25618 / H37Rv)</name>
    <dbReference type="NCBI Taxonomy" id="83332"/>
    <lineage>
        <taxon>Bacteria</taxon>
        <taxon>Bacillati</taxon>
        <taxon>Actinomycetota</taxon>
        <taxon>Actinomycetes</taxon>
        <taxon>Mycobacteriales</taxon>
        <taxon>Mycobacteriaceae</taxon>
        <taxon>Mycobacterium</taxon>
        <taxon>Mycobacterium tuberculosis complex</taxon>
    </lineage>
</organism>
<gene>
    <name type="primary">cyp140</name>
    <name type="ordered locus">Rv1880c</name>
    <name type="ORF">MTCY180.38</name>
</gene>
<name>CP140_MYCTU</name>